<dbReference type="EMBL" id="CP000270">
    <property type="protein sequence ID" value="ABE29033.1"/>
    <property type="molecule type" value="Genomic_DNA"/>
</dbReference>
<dbReference type="RefSeq" id="WP_011486855.1">
    <property type="nucleotide sequence ID" value="NZ_CP008760.1"/>
</dbReference>
<dbReference type="SMR" id="Q145F6"/>
<dbReference type="STRING" id="266265.Bxe_A3966"/>
<dbReference type="KEGG" id="bxb:DR64_1642"/>
<dbReference type="KEGG" id="bxe:Bxe_A3966"/>
<dbReference type="PATRIC" id="fig|266265.5.peg.526"/>
<dbReference type="eggNOG" id="COG1420">
    <property type="taxonomic scope" value="Bacteria"/>
</dbReference>
<dbReference type="OrthoDB" id="9783139at2"/>
<dbReference type="Proteomes" id="UP000001817">
    <property type="component" value="Chromosome 1"/>
</dbReference>
<dbReference type="GO" id="GO:0003677">
    <property type="term" value="F:DNA binding"/>
    <property type="evidence" value="ECO:0007669"/>
    <property type="project" value="InterPro"/>
</dbReference>
<dbReference type="GO" id="GO:0045892">
    <property type="term" value="P:negative regulation of DNA-templated transcription"/>
    <property type="evidence" value="ECO:0007669"/>
    <property type="project" value="UniProtKB-UniRule"/>
</dbReference>
<dbReference type="Gene3D" id="3.30.450.40">
    <property type="match status" value="1"/>
</dbReference>
<dbReference type="Gene3D" id="3.30.390.60">
    <property type="entry name" value="Heat-inducible transcription repressor hrca homolog, domain 3"/>
    <property type="match status" value="1"/>
</dbReference>
<dbReference type="Gene3D" id="1.10.10.10">
    <property type="entry name" value="Winged helix-like DNA-binding domain superfamily/Winged helix DNA-binding domain"/>
    <property type="match status" value="1"/>
</dbReference>
<dbReference type="HAMAP" id="MF_00081">
    <property type="entry name" value="HrcA"/>
    <property type="match status" value="1"/>
</dbReference>
<dbReference type="InterPro" id="IPR029016">
    <property type="entry name" value="GAF-like_dom_sf"/>
</dbReference>
<dbReference type="InterPro" id="IPR002571">
    <property type="entry name" value="HrcA"/>
</dbReference>
<dbReference type="InterPro" id="IPR021153">
    <property type="entry name" value="HrcA_C"/>
</dbReference>
<dbReference type="InterPro" id="IPR036388">
    <property type="entry name" value="WH-like_DNA-bd_sf"/>
</dbReference>
<dbReference type="InterPro" id="IPR036390">
    <property type="entry name" value="WH_DNA-bd_sf"/>
</dbReference>
<dbReference type="InterPro" id="IPR005104">
    <property type="entry name" value="WHTH_HrcA_DNA-bd"/>
</dbReference>
<dbReference type="InterPro" id="IPR023120">
    <property type="entry name" value="WHTH_transcript_rep_HrcA_IDD"/>
</dbReference>
<dbReference type="NCBIfam" id="TIGR00331">
    <property type="entry name" value="hrcA"/>
    <property type="match status" value="1"/>
</dbReference>
<dbReference type="PANTHER" id="PTHR34824">
    <property type="entry name" value="HEAT-INDUCIBLE TRANSCRIPTION REPRESSOR HRCA"/>
    <property type="match status" value="1"/>
</dbReference>
<dbReference type="PANTHER" id="PTHR34824:SF1">
    <property type="entry name" value="HEAT-INDUCIBLE TRANSCRIPTION REPRESSOR HRCA"/>
    <property type="match status" value="1"/>
</dbReference>
<dbReference type="Pfam" id="PF01628">
    <property type="entry name" value="HrcA"/>
    <property type="match status" value="1"/>
</dbReference>
<dbReference type="Pfam" id="PF03444">
    <property type="entry name" value="HrcA_DNA-bdg"/>
    <property type="match status" value="1"/>
</dbReference>
<dbReference type="PIRSF" id="PIRSF005485">
    <property type="entry name" value="HrcA"/>
    <property type="match status" value="1"/>
</dbReference>
<dbReference type="SUPFAM" id="SSF55781">
    <property type="entry name" value="GAF domain-like"/>
    <property type="match status" value="1"/>
</dbReference>
<dbReference type="SUPFAM" id="SSF46785">
    <property type="entry name" value="Winged helix' DNA-binding domain"/>
    <property type="match status" value="1"/>
</dbReference>
<evidence type="ECO:0000255" key="1">
    <source>
        <dbReference type="HAMAP-Rule" id="MF_00081"/>
    </source>
</evidence>
<name>HRCA_PARXL</name>
<feature type="chain" id="PRO_1000010391" description="Heat-inducible transcription repressor HrcA">
    <location>
        <begin position="1"/>
        <end position="339"/>
    </location>
</feature>
<accession>Q145F6</accession>
<proteinExistence type="inferred from homology"/>
<gene>
    <name evidence="1" type="primary">hrcA</name>
    <name type="ordered locus">Bxeno_A0495</name>
    <name type="ORF">Bxe_A3966</name>
</gene>
<protein>
    <recommendedName>
        <fullName evidence="1">Heat-inducible transcription repressor HrcA</fullName>
    </recommendedName>
</protein>
<comment type="function">
    <text evidence="1">Negative regulator of class I heat shock genes (grpE-dnaK-dnaJ and groELS operons). Prevents heat-shock induction of these operons.</text>
</comment>
<comment type="similarity">
    <text evidence="1">Belongs to the HrcA family.</text>
</comment>
<organism>
    <name type="scientific">Paraburkholderia xenovorans (strain LB400)</name>
    <dbReference type="NCBI Taxonomy" id="266265"/>
    <lineage>
        <taxon>Bacteria</taxon>
        <taxon>Pseudomonadati</taxon>
        <taxon>Pseudomonadota</taxon>
        <taxon>Betaproteobacteria</taxon>
        <taxon>Burkholderiales</taxon>
        <taxon>Burkholderiaceae</taxon>
        <taxon>Paraburkholderia</taxon>
    </lineage>
</organism>
<keyword id="KW-1185">Reference proteome</keyword>
<keyword id="KW-0678">Repressor</keyword>
<keyword id="KW-0346">Stress response</keyword>
<keyword id="KW-0804">Transcription</keyword>
<keyword id="KW-0805">Transcription regulation</keyword>
<sequence length="339" mass="37195">MLDPRAQTLLKTLIERYIAEGQPVGSRTLSRYSGLELSPATIRNVMSDLEDLGLVISPHTSAGRIPTPRGYRLFVDTMLTVESAADEEAVMRTVKTTLQAGEPQKIVAAAASVLSNLSQFAGVVLTPRRSHVFKQIEFMRLSDKRILLIIVTPEGDVQNRIMATQRDFSPSQLVEASNYINAHFAGLSFDDVRRRLREEIDELRGDMTTLMHAAVTASTDEADTGETVLISGERNLLEVADLSSDMARLRKLFDVFDQKTSLLQLLDVSSHAAGVQIFIGGESNLVPIEEMSVVTAPYEVNGKIVGTLGVIGPTRMAYNRVIPIVDITARLLSLTLSQQ</sequence>
<reference key="1">
    <citation type="journal article" date="2006" name="Proc. Natl. Acad. Sci. U.S.A.">
        <title>Burkholderia xenovorans LB400 harbors a multi-replicon, 9.73-Mbp genome shaped for versatility.</title>
        <authorList>
            <person name="Chain P.S.G."/>
            <person name="Denef V.J."/>
            <person name="Konstantinidis K.T."/>
            <person name="Vergez L.M."/>
            <person name="Agullo L."/>
            <person name="Reyes V.L."/>
            <person name="Hauser L."/>
            <person name="Cordova M."/>
            <person name="Gomez L."/>
            <person name="Gonzalez M."/>
            <person name="Land M."/>
            <person name="Lao V."/>
            <person name="Larimer F."/>
            <person name="LiPuma J.J."/>
            <person name="Mahenthiralingam E."/>
            <person name="Malfatti S.A."/>
            <person name="Marx C.J."/>
            <person name="Parnell J.J."/>
            <person name="Ramette A."/>
            <person name="Richardson P."/>
            <person name="Seeger M."/>
            <person name="Smith D."/>
            <person name="Spilker T."/>
            <person name="Sul W.J."/>
            <person name="Tsoi T.V."/>
            <person name="Ulrich L.E."/>
            <person name="Zhulin I.B."/>
            <person name="Tiedje J.M."/>
        </authorList>
    </citation>
    <scope>NUCLEOTIDE SEQUENCE [LARGE SCALE GENOMIC DNA]</scope>
    <source>
        <strain>LB400</strain>
    </source>
</reference>